<dbReference type="EMBL" id="CR859324">
    <property type="protein sequence ID" value="CAH91502.1"/>
    <property type="molecule type" value="mRNA"/>
</dbReference>
<dbReference type="RefSeq" id="NP_001125883.1">
    <property type="nucleotide sequence ID" value="NM_001132411.1"/>
</dbReference>
<dbReference type="RefSeq" id="XP_009240090.1">
    <property type="nucleotide sequence ID" value="XM_009241815.1"/>
</dbReference>
<dbReference type="RefSeq" id="XP_009240091.1">
    <property type="nucleotide sequence ID" value="XM_009241816.1"/>
</dbReference>
<dbReference type="RefSeq" id="XP_009240092.1">
    <property type="nucleotide sequence ID" value="XM_009241817.1"/>
</dbReference>
<dbReference type="RefSeq" id="XP_054412791.1">
    <property type="nucleotide sequence ID" value="XM_054556816.2"/>
</dbReference>
<dbReference type="RefSeq" id="XP_054412792.1">
    <property type="nucleotide sequence ID" value="XM_054556817.2"/>
</dbReference>
<dbReference type="RefSeq" id="XP_054412793.1">
    <property type="nucleotide sequence ID" value="XM_054556818.2"/>
</dbReference>
<dbReference type="SMR" id="Q5R9Q8"/>
<dbReference type="FunCoup" id="Q5R9Q8">
    <property type="interactions" value="777"/>
</dbReference>
<dbReference type="STRING" id="9601.ENSPPYP00000018517"/>
<dbReference type="Ensembl" id="ENSPPYT00000054691.1">
    <property type="protein sequence ID" value="ENSPPYP00000028751.1"/>
    <property type="gene ID" value="ENSPPYG00000016555.3"/>
</dbReference>
<dbReference type="GeneID" id="100172815"/>
<dbReference type="KEGG" id="pon:100172815"/>
<dbReference type="CTD" id="100342134"/>
<dbReference type="eggNOG" id="ENOG502S363">
    <property type="taxonomic scope" value="Eukaryota"/>
</dbReference>
<dbReference type="GeneTree" id="ENSGT00390000014270"/>
<dbReference type="HOGENOM" id="CLU_796829_0_0_1"/>
<dbReference type="InParanoid" id="Q5R9Q8"/>
<dbReference type="OMA" id="FMAKGTE"/>
<dbReference type="OrthoDB" id="10036464at2759"/>
<dbReference type="Proteomes" id="UP000001595">
    <property type="component" value="Chromosome 6"/>
</dbReference>
<dbReference type="GO" id="GO:0005737">
    <property type="term" value="C:cytoplasm"/>
    <property type="evidence" value="ECO:0000250"/>
    <property type="project" value="UniProtKB"/>
</dbReference>
<dbReference type="GO" id="GO:0000139">
    <property type="term" value="C:Golgi membrane"/>
    <property type="evidence" value="ECO:0000250"/>
    <property type="project" value="UniProtKB"/>
</dbReference>
<dbReference type="GO" id="GO:0030496">
    <property type="term" value="C:midbody"/>
    <property type="evidence" value="ECO:0000250"/>
    <property type="project" value="UniProtKB"/>
</dbReference>
<dbReference type="GO" id="GO:0005730">
    <property type="term" value="C:nucleolus"/>
    <property type="evidence" value="ECO:0007669"/>
    <property type="project" value="TreeGrafter"/>
</dbReference>
<dbReference type="GO" id="GO:0005886">
    <property type="term" value="C:plasma membrane"/>
    <property type="evidence" value="ECO:0000250"/>
    <property type="project" value="UniProtKB"/>
</dbReference>
<dbReference type="GO" id="GO:0006338">
    <property type="term" value="P:chromatin remodeling"/>
    <property type="evidence" value="ECO:0000250"/>
    <property type="project" value="UniProtKB"/>
</dbReference>
<dbReference type="GO" id="GO:0050673">
    <property type="term" value="P:epithelial cell proliferation"/>
    <property type="evidence" value="ECO:0000250"/>
    <property type="project" value="UniProtKB"/>
</dbReference>
<dbReference type="GO" id="GO:0045787">
    <property type="term" value="P:positive regulation of cell cycle"/>
    <property type="evidence" value="ECO:0000250"/>
    <property type="project" value="UniProtKB"/>
</dbReference>
<dbReference type="GO" id="GO:0042060">
    <property type="term" value="P:wound healing"/>
    <property type="evidence" value="ECO:0000250"/>
    <property type="project" value="UniProtKB"/>
</dbReference>
<dbReference type="InterPro" id="IPR038757">
    <property type="entry name" value="BRAP"/>
</dbReference>
<dbReference type="PANTHER" id="PTHR35259">
    <property type="entry name" value="BOMBESIN RECEPTOR-ACTIVATED PROTEIN C6ORF89"/>
    <property type="match status" value="1"/>
</dbReference>
<dbReference type="PANTHER" id="PTHR35259:SF1">
    <property type="entry name" value="BOMBESIN RECEPTOR-ACTIVATED PROTEIN C6ORF89"/>
    <property type="match status" value="1"/>
</dbReference>
<evidence type="ECO:0000250" key="1">
    <source>
        <dbReference type="UniProtKB" id="Q6UWU4"/>
    </source>
</evidence>
<evidence type="ECO:0000255" key="2"/>
<evidence type="ECO:0000305" key="3"/>
<organism>
    <name type="scientific">Pongo abelii</name>
    <name type="common">Sumatran orangutan</name>
    <name type="synonym">Pongo pygmaeus abelii</name>
    <dbReference type="NCBI Taxonomy" id="9601"/>
    <lineage>
        <taxon>Eukaryota</taxon>
        <taxon>Metazoa</taxon>
        <taxon>Chordata</taxon>
        <taxon>Craniata</taxon>
        <taxon>Vertebrata</taxon>
        <taxon>Euteleostomi</taxon>
        <taxon>Mammalia</taxon>
        <taxon>Eutheria</taxon>
        <taxon>Euarchontoglires</taxon>
        <taxon>Primates</taxon>
        <taxon>Haplorrhini</taxon>
        <taxon>Catarrhini</taxon>
        <taxon>Hominidae</taxon>
        <taxon>Pongo</taxon>
    </lineage>
</organism>
<comment type="function">
    <text evidence="1">Exhibits histone deacetylase (HDAC) enhancer properties. May play a role in cell cycle progression and wound repair of bronchial epithelial cells.</text>
</comment>
<comment type="subunit">
    <text evidence="1">Homodimer (By similarity). Interacts with BRS3 (By similarity). Interacts (via N-terminus) with SIN3B (By similarity).</text>
</comment>
<comment type="subcellular location">
    <subcellularLocation>
        <location evidence="1">Golgi apparatus membrane</location>
        <topology evidence="1">Single-pass type II membrane protein</topology>
    </subcellularLocation>
    <subcellularLocation>
        <location evidence="1">Cytoplasm</location>
    </subcellularLocation>
</comment>
<comment type="PTM">
    <text evidence="1">Glycosylated.</text>
</comment>
<feature type="chain" id="PRO_0000237623" description="Bombesin receptor-activated protein C6orf89 homolog">
    <location>
        <begin position="1"/>
        <end position="347"/>
    </location>
</feature>
<feature type="topological domain" description="Cytoplasmic" evidence="3">
    <location>
        <begin position="1"/>
        <end position="58"/>
    </location>
</feature>
<feature type="transmembrane region" description="Helical" evidence="2">
    <location>
        <begin position="59"/>
        <end position="79"/>
    </location>
</feature>
<feature type="topological domain" description="Extracellular" evidence="3">
    <location>
        <begin position="80"/>
        <end position="347"/>
    </location>
</feature>
<reference key="1">
    <citation type="submission" date="2004-11" db="EMBL/GenBank/DDBJ databases">
        <authorList>
            <consortium name="The German cDNA consortium"/>
        </authorList>
    </citation>
    <scope>NUCLEOTIDE SEQUENCE [LARGE SCALE MRNA]</scope>
    <source>
        <tissue>Kidney</tissue>
    </source>
</reference>
<protein>
    <recommendedName>
        <fullName>Bombesin receptor-activated protein C6orf89 homolog</fullName>
    </recommendedName>
</protein>
<keyword id="KW-0963">Cytoplasm</keyword>
<keyword id="KW-0325">Glycoprotein</keyword>
<keyword id="KW-0333">Golgi apparatus</keyword>
<keyword id="KW-0472">Membrane</keyword>
<keyword id="KW-1185">Reference proteome</keyword>
<keyword id="KW-0735">Signal-anchor</keyword>
<keyword id="KW-0812">Transmembrane</keyword>
<keyword id="KW-1133">Transmembrane helix</keyword>
<name>CF089_PONAB</name>
<proteinExistence type="evidence at transcript level"/>
<sequence>MDLAANEISIYDKLSETVDLVRQTGHQCGMSEKAIEKFIRQLLEKNEPQRPPPQYPLLIVVYKVLATLGLILLTAYFVIQPFSPLAPEPVLSGAHTWRSLIHHIRLMSLPIAKKYMSENKGVPLHVGDEDRPFPDFDPWWTNDCEQNESEPIPANCTGCAQKHLKVMLLEDAPRKFERLHPLVIKTGKPLLSEEIQHFLCQYPEATEGFSEGFFAKWWRCFPERWFPFPYPWRRPLNRSQILRELFPVFTHLPFPKDASLNKCFFLHPEPVVGSKMHKMPDLFIIGSGEAMLQLIPPFQCRRHCQSVAMPIEPGDIGYVDTTHWKVYIIARGVQPLVICDGTAFSEL</sequence>
<accession>Q5R9Q8</accession>